<feature type="chain" id="PRO_0000214797" description="Sodium-dependent neutral amino acid transporter B(0)AT2">
    <location>
        <begin position="1"/>
        <end position="729"/>
    </location>
</feature>
<feature type="topological domain" description="Cytoplasmic" evidence="3">
    <location>
        <begin position="1"/>
        <end position="69"/>
    </location>
</feature>
<feature type="transmembrane region" description="Helical; Name=1" evidence="3">
    <location>
        <begin position="70"/>
        <end position="90"/>
    </location>
</feature>
<feature type="transmembrane region" description="Helical; Name=2" evidence="3">
    <location>
        <begin position="98"/>
        <end position="117"/>
    </location>
</feature>
<feature type="transmembrane region" description="Helical; Name=3" evidence="3">
    <location>
        <begin position="142"/>
        <end position="162"/>
    </location>
</feature>
<feature type="topological domain" description="Extracellular" evidence="3">
    <location>
        <begin position="163"/>
        <end position="225"/>
    </location>
</feature>
<feature type="transmembrane region" description="Helical; Name=4" evidence="3">
    <location>
        <begin position="226"/>
        <end position="244"/>
    </location>
</feature>
<feature type="transmembrane region" description="Helical; Name=5" evidence="3">
    <location>
        <begin position="253"/>
        <end position="270"/>
    </location>
</feature>
<feature type="transmembrane region" description="Helical; Name=6" evidence="3">
    <location>
        <begin position="306"/>
        <end position="323"/>
    </location>
</feature>
<feature type="transmembrane region" description="Helical; Name=7" evidence="3">
    <location>
        <begin position="335"/>
        <end position="356"/>
    </location>
</feature>
<feature type="topological domain" description="Extracellular" evidence="3">
    <location>
        <begin position="357"/>
        <end position="452"/>
    </location>
</feature>
<feature type="transmembrane region" description="Helical; Name=8" evidence="3">
    <location>
        <begin position="453"/>
        <end position="472"/>
    </location>
</feature>
<feature type="transmembrane region" description="Helical; Name=9" evidence="3">
    <location>
        <begin position="496"/>
        <end position="514"/>
    </location>
</feature>
<feature type="transmembrane region" description="Helical; Name=10" evidence="3">
    <location>
        <begin position="530"/>
        <end position="550"/>
    </location>
</feature>
<feature type="transmembrane region" description="Helical; Name=11" evidence="3">
    <location>
        <begin position="571"/>
        <end position="592"/>
    </location>
</feature>
<feature type="transmembrane region" description="Helical; Name=12" evidence="3">
    <location>
        <begin position="620"/>
        <end position="642"/>
    </location>
</feature>
<feature type="topological domain" description="Cytoplasmic" evidence="3">
    <location>
        <begin position="643"/>
        <end position="729"/>
    </location>
</feature>
<feature type="modified residue" description="Phosphoserine" evidence="2">
    <location>
        <position position="25"/>
    </location>
</feature>
<feature type="modified residue" description="Phosphoserine" evidence="2">
    <location>
        <position position="55"/>
    </location>
</feature>
<feature type="modified residue" description="Phosphoserine" evidence="2">
    <location>
        <position position="687"/>
    </location>
</feature>
<feature type="modified residue" description="Phosphoserine" evidence="2">
    <location>
        <position position="699"/>
    </location>
</feature>
<feature type="modified residue" description="Phosphoserine" evidence="2">
    <location>
        <position position="701"/>
    </location>
</feature>
<feature type="glycosylation site" description="N-linked (GlcNAc...) asparagine" evidence="3">
    <location>
        <position position="187"/>
    </location>
</feature>
<feature type="glycosylation site" description="N-linked (GlcNAc...) asparagine" evidence="3">
    <location>
        <position position="213"/>
    </location>
</feature>
<feature type="glycosylation site" description="N-linked (GlcNAc...) asparagine" evidence="3">
    <location>
        <position position="383"/>
    </location>
</feature>
<feature type="glycosylation site" description="N-linked (GlcNAc...) asparagine" evidence="3">
    <location>
        <position position="394"/>
    </location>
</feature>
<evidence type="ECO:0000250" key="1">
    <source>
        <dbReference type="UniProtKB" id="Q8BG16"/>
    </source>
</evidence>
<evidence type="ECO:0000250" key="2">
    <source>
        <dbReference type="UniProtKB" id="Q9H2J7"/>
    </source>
</evidence>
<evidence type="ECO:0000255" key="3"/>
<evidence type="ECO:0000305" key="4"/>
<comment type="function">
    <text evidence="2">Functions as a sodium-dependent neutral amino acid transporter. Exhibits preference for the branched-chain amino acids, particularly leucine, valine and isoleucine and methionine. Can also transport low-affinity substrates such as alanine, phenylalanine, glutamine and pipecolic acid. Mediates the saturable, pH-sensitive and electrogenic cotransport of proline and sodium ions with a stoichiometry of 1:1. May have a role as transporter for neurotransmitter precursors into neurons. In contrast to other members of the neurotransmitter transporter family, does not appear to be chloride-dependent.</text>
</comment>
<comment type="catalytic activity">
    <reaction evidence="2">
        <text>L-leucine(in) + Na(+)(in) = L-leucine(out) + Na(+)(out)</text>
        <dbReference type="Rhea" id="RHEA:29263"/>
        <dbReference type="ChEBI" id="CHEBI:29101"/>
        <dbReference type="ChEBI" id="CHEBI:57427"/>
    </reaction>
</comment>
<comment type="catalytic activity">
    <reaction evidence="2">
        <text>L-isoleucine(in) + Na(+)(in) = L-isoleucine(out) + Na(+)(out)</text>
        <dbReference type="Rhea" id="RHEA:29275"/>
        <dbReference type="ChEBI" id="CHEBI:29101"/>
        <dbReference type="ChEBI" id="CHEBI:58045"/>
    </reaction>
</comment>
<comment type="catalytic activity">
    <reaction evidence="2">
        <text>L-methionine(in) + Na(+)(in) = L-methionine(out) + Na(+)(out)</text>
        <dbReference type="Rhea" id="RHEA:68240"/>
        <dbReference type="ChEBI" id="CHEBI:29101"/>
        <dbReference type="ChEBI" id="CHEBI:57844"/>
    </reaction>
</comment>
<comment type="catalytic activity">
    <reaction evidence="2">
        <text>L-proline(in) + Na(+)(in) = L-proline(out) + Na(+)(out)</text>
        <dbReference type="Rhea" id="RHEA:28967"/>
        <dbReference type="ChEBI" id="CHEBI:29101"/>
        <dbReference type="ChEBI" id="CHEBI:60039"/>
    </reaction>
</comment>
<comment type="catalytic activity">
    <reaction evidence="2">
        <text>L-alanine(in) + Na(+)(in) = L-alanine(out) + Na(+)(out)</text>
        <dbReference type="Rhea" id="RHEA:29283"/>
        <dbReference type="ChEBI" id="CHEBI:29101"/>
        <dbReference type="ChEBI" id="CHEBI:57972"/>
    </reaction>
</comment>
<comment type="catalytic activity">
    <reaction evidence="2">
        <text>L-asparagine(in) + Na(+)(in) = L-asparagine(out) + Na(+)(out)</text>
        <dbReference type="Rhea" id="RHEA:71383"/>
        <dbReference type="ChEBI" id="CHEBI:29101"/>
        <dbReference type="ChEBI" id="CHEBI:58048"/>
    </reaction>
</comment>
<comment type="catalytic activity">
    <reaction evidence="2">
        <text>L-valine(in) + Na(+)(in) = L-valine(out) + Na(+)(out)</text>
        <dbReference type="Rhea" id="RHEA:29267"/>
        <dbReference type="ChEBI" id="CHEBI:29101"/>
        <dbReference type="ChEBI" id="CHEBI:57762"/>
    </reaction>
</comment>
<comment type="catalytic activity">
    <reaction evidence="2">
        <text>L-cysteine(in) + Na(+)(in) = L-cysteine(out) + Na(+)(out)</text>
        <dbReference type="Rhea" id="RHEA:68232"/>
        <dbReference type="ChEBI" id="CHEBI:29101"/>
        <dbReference type="ChEBI" id="CHEBI:35235"/>
    </reaction>
</comment>
<comment type="catalytic activity">
    <reaction evidence="2">
        <text>L-glutamine(in) + Na(+)(in) = L-glutamine(out) + Na(+)(out)</text>
        <dbReference type="Rhea" id="RHEA:68236"/>
        <dbReference type="ChEBI" id="CHEBI:29101"/>
        <dbReference type="ChEBI" id="CHEBI:58359"/>
    </reaction>
</comment>
<comment type="catalytic activity">
    <reaction evidence="2">
        <text>L-serine(in) + Na(+)(in) = L-serine(out) + Na(+)(out)</text>
        <dbReference type="Rhea" id="RHEA:29575"/>
        <dbReference type="ChEBI" id="CHEBI:29101"/>
        <dbReference type="ChEBI" id="CHEBI:33384"/>
    </reaction>
</comment>
<comment type="catalytic activity">
    <reaction evidence="2">
        <text>L-threonine(in) + Na(+)(in) = L-threonine(out) + Na(+)(out)</text>
        <dbReference type="Rhea" id="RHEA:69999"/>
        <dbReference type="ChEBI" id="CHEBI:29101"/>
        <dbReference type="ChEBI" id="CHEBI:57926"/>
    </reaction>
</comment>
<comment type="catalytic activity">
    <reaction evidence="1">
        <text>L-pipecolate(in) + Na(+)(in) = L-pipecolate(out) + Na(+)(out)</text>
        <dbReference type="Rhea" id="RHEA:71387"/>
        <dbReference type="ChEBI" id="CHEBI:29101"/>
        <dbReference type="ChEBI" id="CHEBI:61185"/>
    </reaction>
</comment>
<comment type="catalytic activity">
    <reaction evidence="1">
        <text>L-phenylalanine(in) + Na(+)(in) = L-phenylalanine(out) + Na(+)(out)</text>
        <dbReference type="Rhea" id="RHEA:68244"/>
        <dbReference type="ChEBI" id="CHEBI:29101"/>
        <dbReference type="ChEBI" id="CHEBI:58095"/>
    </reaction>
</comment>
<comment type="subcellular location">
    <subcellularLocation>
        <location evidence="2">Membrane</location>
        <topology evidence="2">Multi-pass membrane protein</topology>
    </subcellularLocation>
</comment>
<comment type="similarity">
    <text evidence="4">Belongs to the sodium:neurotransmitter symporter (SNF) (TC 2.A.22) family. SLC6A15 subfamily.</text>
</comment>
<gene>
    <name type="primary">SLC6A15</name>
    <name type="synonym">B0AT2</name>
    <name type="synonym">NTT73</name>
</gene>
<protein>
    <recommendedName>
        <fullName>Sodium-dependent neutral amino acid transporter B(0)AT2</fullName>
    </recommendedName>
    <alternativeName>
        <fullName>Sodium- and chloride-dependent neurotransmitter transporter NTT73</fullName>
    </alternativeName>
    <alternativeName>
        <fullName>Solute carrier family 6 member 15</fullName>
    </alternativeName>
    <alternativeName>
        <fullName>Transporter v7-3</fullName>
    </alternativeName>
</protein>
<accession>Q9XS59</accession>
<name>S6A15_BOVIN</name>
<organism>
    <name type="scientific">Bos taurus</name>
    <name type="common">Bovine</name>
    <dbReference type="NCBI Taxonomy" id="9913"/>
    <lineage>
        <taxon>Eukaryota</taxon>
        <taxon>Metazoa</taxon>
        <taxon>Chordata</taxon>
        <taxon>Craniata</taxon>
        <taxon>Vertebrata</taxon>
        <taxon>Euteleostomi</taxon>
        <taxon>Mammalia</taxon>
        <taxon>Eutheria</taxon>
        <taxon>Laurasiatheria</taxon>
        <taxon>Artiodactyla</taxon>
        <taxon>Ruminantia</taxon>
        <taxon>Pecora</taxon>
        <taxon>Bovidae</taxon>
        <taxon>Bovinae</taxon>
        <taxon>Bos</taxon>
    </lineage>
</organism>
<dbReference type="EMBL" id="AB020854">
    <property type="protein sequence ID" value="BAA77223.1"/>
    <property type="molecule type" value="mRNA"/>
</dbReference>
<dbReference type="RefSeq" id="NP_851366.1">
    <property type="nucleotide sequence ID" value="NM_181023.2"/>
</dbReference>
<dbReference type="RefSeq" id="XP_005206100.1">
    <property type="nucleotide sequence ID" value="XM_005206043.4"/>
</dbReference>
<dbReference type="RefSeq" id="XP_010803063.1">
    <property type="nucleotide sequence ID" value="XM_010804761.4"/>
</dbReference>
<dbReference type="SMR" id="Q9XS59"/>
<dbReference type="FunCoup" id="Q9XS59">
    <property type="interactions" value="895"/>
</dbReference>
<dbReference type="STRING" id="9913.ENSBTAP00000060813"/>
<dbReference type="GlyCosmos" id="Q9XS59">
    <property type="glycosylation" value="4 sites, No reported glycans"/>
</dbReference>
<dbReference type="GlyGen" id="Q9XS59">
    <property type="glycosylation" value="4 sites"/>
</dbReference>
<dbReference type="PaxDb" id="9913-ENSBTAP00000024524"/>
<dbReference type="Ensembl" id="ENSBTAT00000024524.3">
    <property type="protein sequence ID" value="ENSBTAP00000024524.1"/>
    <property type="gene ID" value="ENSBTAG00000018432.4"/>
</dbReference>
<dbReference type="GeneID" id="281952"/>
<dbReference type="KEGG" id="bta:281952"/>
<dbReference type="CTD" id="55117"/>
<dbReference type="VEuPathDB" id="HostDB:ENSBTAG00000018432"/>
<dbReference type="VGNC" id="VGNC:34918">
    <property type="gene designation" value="SLC6A15"/>
</dbReference>
<dbReference type="eggNOG" id="KOG3659">
    <property type="taxonomic scope" value="Eukaryota"/>
</dbReference>
<dbReference type="GeneTree" id="ENSGT00940000157277"/>
<dbReference type="HOGENOM" id="CLU_006855_7_1_1"/>
<dbReference type="InParanoid" id="Q9XS59"/>
<dbReference type="OMA" id="TMTPPSY"/>
<dbReference type="OrthoDB" id="6581954at2759"/>
<dbReference type="TreeFam" id="TF352709"/>
<dbReference type="Reactome" id="R-BTA-352230">
    <property type="pathway name" value="Amino acid transport across the plasma membrane"/>
</dbReference>
<dbReference type="Reactome" id="R-BTA-442660">
    <property type="pathway name" value="Na+/Cl- dependent neurotransmitter transporters"/>
</dbReference>
<dbReference type="Proteomes" id="UP000009136">
    <property type="component" value="Chromosome 5"/>
</dbReference>
<dbReference type="Bgee" id="ENSBTAG00000018432">
    <property type="expression patterns" value="Expressed in occipital lobe and 57 other cell types or tissues"/>
</dbReference>
<dbReference type="GO" id="GO:0016020">
    <property type="term" value="C:membrane"/>
    <property type="evidence" value="ECO:0000250"/>
    <property type="project" value="UniProtKB"/>
</dbReference>
<dbReference type="GO" id="GO:0005886">
    <property type="term" value="C:plasma membrane"/>
    <property type="evidence" value="ECO:0000318"/>
    <property type="project" value="GO_Central"/>
</dbReference>
<dbReference type="GO" id="GO:0015657">
    <property type="term" value="F:branched-chain amino acid:sodium symporter activity"/>
    <property type="evidence" value="ECO:0000250"/>
    <property type="project" value="UniProtKB"/>
</dbReference>
<dbReference type="GO" id="GO:0005295">
    <property type="term" value="F:neutral L-amino acid:sodium symporter activity"/>
    <property type="evidence" value="ECO:0000250"/>
    <property type="project" value="UniProtKB"/>
</dbReference>
<dbReference type="GO" id="GO:0005298">
    <property type="term" value="F:proline:sodium symporter activity"/>
    <property type="evidence" value="ECO:0000250"/>
    <property type="project" value="UniProtKB"/>
</dbReference>
<dbReference type="GO" id="GO:0015820">
    <property type="term" value="P:L-leucine transport"/>
    <property type="evidence" value="ECO:0000250"/>
    <property type="project" value="UniProtKB"/>
</dbReference>
<dbReference type="GO" id="GO:0006836">
    <property type="term" value="P:neurotransmitter transport"/>
    <property type="evidence" value="ECO:0007669"/>
    <property type="project" value="UniProtKB-KW"/>
</dbReference>
<dbReference type="GO" id="GO:0015804">
    <property type="term" value="P:neutral amino acid transport"/>
    <property type="evidence" value="ECO:0000250"/>
    <property type="project" value="UniProtKB"/>
</dbReference>
<dbReference type="GO" id="GO:0015824">
    <property type="term" value="P:proline transport"/>
    <property type="evidence" value="ECO:0000250"/>
    <property type="project" value="UniProtKB"/>
</dbReference>
<dbReference type="GO" id="GO:0035725">
    <property type="term" value="P:sodium ion transmembrane transport"/>
    <property type="evidence" value="ECO:0000318"/>
    <property type="project" value="GO_Central"/>
</dbReference>
<dbReference type="CDD" id="cd11522">
    <property type="entry name" value="SLC6sbd_SBAT1"/>
    <property type="match status" value="1"/>
</dbReference>
<dbReference type="InterPro" id="IPR042934">
    <property type="entry name" value="B(0)AT2"/>
</dbReference>
<dbReference type="InterPro" id="IPR000175">
    <property type="entry name" value="Na/ntran_symport"/>
</dbReference>
<dbReference type="InterPro" id="IPR002438">
    <property type="entry name" value="Neutral_aa_SLC6"/>
</dbReference>
<dbReference type="InterPro" id="IPR037272">
    <property type="entry name" value="SNS_sf"/>
</dbReference>
<dbReference type="NCBIfam" id="NF037979">
    <property type="entry name" value="Na_transp"/>
    <property type="match status" value="1"/>
</dbReference>
<dbReference type="PANTHER" id="PTHR11616:SF101">
    <property type="entry name" value="SODIUM-DEPENDENT NEUTRAL AMINO ACID TRANSPORTER B(0)AT2"/>
    <property type="match status" value="1"/>
</dbReference>
<dbReference type="PANTHER" id="PTHR11616">
    <property type="entry name" value="SODIUM/CHLORIDE DEPENDENT TRANSPORTER"/>
    <property type="match status" value="1"/>
</dbReference>
<dbReference type="Pfam" id="PF00209">
    <property type="entry name" value="SNF"/>
    <property type="match status" value="1"/>
</dbReference>
<dbReference type="PRINTS" id="PR00176">
    <property type="entry name" value="NANEUSMPORT"/>
</dbReference>
<dbReference type="PRINTS" id="PR01206">
    <property type="entry name" value="ORPHTRNSPORT"/>
</dbReference>
<dbReference type="SUPFAM" id="SSF161070">
    <property type="entry name" value="SNF-like"/>
    <property type="match status" value="1"/>
</dbReference>
<dbReference type="PROSITE" id="PS00610">
    <property type="entry name" value="NA_NEUROTRAN_SYMP_1"/>
    <property type="match status" value="1"/>
</dbReference>
<dbReference type="PROSITE" id="PS00754">
    <property type="entry name" value="NA_NEUROTRAN_SYMP_2"/>
    <property type="match status" value="1"/>
</dbReference>
<dbReference type="PROSITE" id="PS50267">
    <property type="entry name" value="NA_NEUROTRAN_SYMP_3"/>
    <property type="match status" value="1"/>
</dbReference>
<keyword id="KW-0029">Amino-acid transport</keyword>
<keyword id="KW-0325">Glycoprotein</keyword>
<keyword id="KW-0406">Ion transport</keyword>
<keyword id="KW-0472">Membrane</keyword>
<keyword id="KW-0532">Neurotransmitter transport</keyword>
<keyword id="KW-0597">Phosphoprotein</keyword>
<keyword id="KW-1185">Reference proteome</keyword>
<keyword id="KW-0915">Sodium</keyword>
<keyword id="KW-0739">Sodium transport</keyword>
<keyword id="KW-0769">Symport</keyword>
<keyword id="KW-0812">Transmembrane</keyword>
<keyword id="KW-1133">Transmembrane helix</keyword>
<keyword id="KW-0813">Transport</keyword>
<reference key="1">
    <citation type="journal article" date="1999" name="FEBS Lett.">
        <title>Cloning of a bovine orphan transporter and its short splicing variant.</title>
        <authorList>
            <person name="Sakata K."/>
            <person name="Shimada S."/>
            <person name="Yamashita T."/>
            <person name="Inoue K."/>
            <person name="Tohyama M."/>
        </authorList>
    </citation>
    <scope>NUCLEOTIDE SEQUENCE [MRNA]</scope>
    <source>
        <tissue>Retina</tissue>
    </source>
</reference>
<proteinExistence type="evidence at transcript level"/>
<sequence>MPKNSKVVKRELDDEVIESVKDLLSNEDSADDAFKKSELIVDVPEEKDTDVVERSEVKDARPAWNSKLQYILAQVGFSVGLGNVWRFPYLCQKNGGGAYLLPYLILLLVIGIPLFFLELSVGQRIRRGSIGVWNYISPQLGGIGFASCVVCFFVALYYNVIIGWSLFYFSQSFQQPLPWDQCPLVKNASHTFVEPECEKSSATTYYWYREALNISTSISESGGLNWKMTICLLAAWVVVCLAMIKGIQSSGKIMYFSSLFPYVVLICFLIRALLLNGSVDGIRHMFTPELEIMLEPKVWREAAAQVFFALGLGFGGVIAFSSYNKRDNNCHFDAVLVSFINFFTSILATLVVFAVLGFKANVINEKCIAENSEMIIKLVKMGNISQDIIPHHINFSAITAEDYDLIYDIIQKVKEEEFPALHLNACQIEDELNKAVQGTGLAFIAFTEAMTHFPASPFWSVMFFLMLVNLGLGSMFGTIEGIITPVVDTFKVRKEILTVICCLLAFCIGLIFVQRSGNYFVTMFDDYSATLPLLIVVILENIAVSFVYGIDKFMEDLKDMLGFTPNRYYYYMWKYISPLMLLSLLIASIVNMGLSPPGYNAWMEDKASEKFLSYPTWGMVICISLMVLAILPIPVVFIIRRCNLIDDSSGNLASVTYKRGRVLKEPVNLEGDDASLIHGKISSEMSSPNFGKNIYRKQSGSPTLDTAPNGRYGIGYLMADMPDMPESDL</sequence>